<name>GLO2_NEIG2</name>
<protein>
    <recommendedName>
        <fullName evidence="1">Hydroxyacylglutathione hydrolase</fullName>
        <ecNumber evidence="1">3.1.2.6</ecNumber>
    </recommendedName>
    <alternativeName>
        <fullName evidence="1">Glyoxalase II</fullName>
        <shortName evidence="1">Glx II</shortName>
    </alternativeName>
</protein>
<evidence type="ECO:0000255" key="1">
    <source>
        <dbReference type="HAMAP-Rule" id="MF_01374"/>
    </source>
</evidence>
<gene>
    <name evidence="1" type="primary">gloB</name>
    <name type="ordered locus">NGK_1974</name>
</gene>
<dbReference type="EC" id="3.1.2.6" evidence="1"/>
<dbReference type="EMBL" id="CP001050">
    <property type="protein sequence ID" value="ACF30592.1"/>
    <property type="molecule type" value="Genomic_DNA"/>
</dbReference>
<dbReference type="RefSeq" id="WP_003692274.1">
    <property type="nucleotide sequence ID" value="NC_011035.1"/>
</dbReference>
<dbReference type="SMR" id="B4RJC7"/>
<dbReference type="KEGG" id="ngk:NGK_1974"/>
<dbReference type="HOGENOM" id="CLU_030571_4_1_4"/>
<dbReference type="UniPathway" id="UPA00619">
    <property type="reaction ID" value="UER00676"/>
</dbReference>
<dbReference type="Proteomes" id="UP000002564">
    <property type="component" value="Chromosome"/>
</dbReference>
<dbReference type="GO" id="GO:0004416">
    <property type="term" value="F:hydroxyacylglutathione hydrolase activity"/>
    <property type="evidence" value="ECO:0007669"/>
    <property type="project" value="UniProtKB-UniRule"/>
</dbReference>
<dbReference type="GO" id="GO:0046872">
    <property type="term" value="F:metal ion binding"/>
    <property type="evidence" value="ECO:0007669"/>
    <property type="project" value="UniProtKB-KW"/>
</dbReference>
<dbReference type="GO" id="GO:0019243">
    <property type="term" value="P:methylglyoxal catabolic process to D-lactate via S-lactoyl-glutathione"/>
    <property type="evidence" value="ECO:0007669"/>
    <property type="project" value="InterPro"/>
</dbReference>
<dbReference type="CDD" id="cd07723">
    <property type="entry name" value="hydroxyacylglutathione_hydrolase_MBL-fold"/>
    <property type="match status" value="1"/>
</dbReference>
<dbReference type="Gene3D" id="3.60.15.10">
    <property type="entry name" value="Ribonuclease Z/Hydroxyacylglutathione hydrolase-like"/>
    <property type="match status" value="1"/>
</dbReference>
<dbReference type="HAMAP" id="MF_01374">
    <property type="entry name" value="Glyoxalase_2"/>
    <property type="match status" value="1"/>
</dbReference>
<dbReference type="InterPro" id="IPR035680">
    <property type="entry name" value="Clx_II_MBL"/>
</dbReference>
<dbReference type="InterPro" id="IPR050110">
    <property type="entry name" value="Glyoxalase_II_hydrolase"/>
</dbReference>
<dbReference type="InterPro" id="IPR032282">
    <property type="entry name" value="HAGH_C"/>
</dbReference>
<dbReference type="InterPro" id="IPR017782">
    <property type="entry name" value="Hydroxyacylglutathione_Hdrlase"/>
</dbReference>
<dbReference type="InterPro" id="IPR001279">
    <property type="entry name" value="Metallo-B-lactamas"/>
</dbReference>
<dbReference type="InterPro" id="IPR036866">
    <property type="entry name" value="RibonucZ/Hydroxyglut_hydro"/>
</dbReference>
<dbReference type="NCBIfam" id="TIGR03413">
    <property type="entry name" value="GSH_gloB"/>
    <property type="match status" value="1"/>
</dbReference>
<dbReference type="PANTHER" id="PTHR43705">
    <property type="entry name" value="HYDROXYACYLGLUTATHIONE HYDROLASE"/>
    <property type="match status" value="1"/>
</dbReference>
<dbReference type="PANTHER" id="PTHR43705:SF1">
    <property type="entry name" value="HYDROXYACYLGLUTATHIONE HYDROLASE GLOB"/>
    <property type="match status" value="1"/>
</dbReference>
<dbReference type="Pfam" id="PF16123">
    <property type="entry name" value="HAGH_C"/>
    <property type="match status" value="1"/>
</dbReference>
<dbReference type="Pfam" id="PF00753">
    <property type="entry name" value="Lactamase_B"/>
    <property type="match status" value="1"/>
</dbReference>
<dbReference type="PIRSF" id="PIRSF005457">
    <property type="entry name" value="Glx"/>
    <property type="match status" value="1"/>
</dbReference>
<dbReference type="SMART" id="SM00849">
    <property type="entry name" value="Lactamase_B"/>
    <property type="match status" value="1"/>
</dbReference>
<dbReference type="SUPFAM" id="SSF56281">
    <property type="entry name" value="Metallo-hydrolase/oxidoreductase"/>
    <property type="match status" value="1"/>
</dbReference>
<organism>
    <name type="scientific">Neisseria gonorrhoeae (strain NCCP11945)</name>
    <dbReference type="NCBI Taxonomy" id="521006"/>
    <lineage>
        <taxon>Bacteria</taxon>
        <taxon>Pseudomonadati</taxon>
        <taxon>Pseudomonadota</taxon>
        <taxon>Betaproteobacteria</taxon>
        <taxon>Neisseriales</taxon>
        <taxon>Neisseriaceae</taxon>
        <taxon>Neisseria</taxon>
    </lineage>
</organism>
<accession>B4RJC7</accession>
<proteinExistence type="inferred from homology"/>
<feature type="chain" id="PRO_1000144773" description="Hydroxyacylglutathione hydrolase">
    <location>
        <begin position="1"/>
        <end position="250"/>
    </location>
</feature>
<feature type="binding site" evidence="1">
    <location>
        <position position="52"/>
    </location>
    <ligand>
        <name>Zn(2+)</name>
        <dbReference type="ChEBI" id="CHEBI:29105"/>
        <label>1</label>
    </ligand>
</feature>
<feature type="binding site" evidence="1">
    <location>
        <position position="54"/>
    </location>
    <ligand>
        <name>Zn(2+)</name>
        <dbReference type="ChEBI" id="CHEBI:29105"/>
        <label>1</label>
    </ligand>
</feature>
<feature type="binding site" evidence="1">
    <location>
        <position position="56"/>
    </location>
    <ligand>
        <name>Zn(2+)</name>
        <dbReference type="ChEBI" id="CHEBI:29105"/>
        <label>2</label>
    </ligand>
</feature>
<feature type="binding site" evidence="1">
    <location>
        <position position="57"/>
    </location>
    <ligand>
        <name>Zn(2+)</name>
        <dbReference type="ChEBI" id="CHEBI:29105"/>
        <label>2</label>
    </ligand>
</feature>
<feature type="binding site" evidence="1">
    <location>
        <position position="107"/>
    </location>
    <ligand>
        <name>Zn(2+)</name>
        <dbReference type="ChEBI" id="CHEBI:29105"/>
        <label>1</label>
    </ligand>
</feature>
<feature type="binding site" evidence="1">
    <location>
        <position position="128"/>
    </location>
    <ligand>
        <name>Zn(2+)</name>
        <dbReference type="ChEBI" id="CHEBI:29105"/>
        <label>1</label>
    </ligand>
</feature>
<feature type="binding site" evidence="1">
    <location>
        <position position="128"/>
    </location>
    <ligand>
        <name>Zn(2+)</name>
        <dbReference type="ChEBI" id="CHEBI:29105"/>
        <label>2</label>
    </ligand>
</feature>
<feature type="binding site" evidence="1">
    <location>
        <position position="166"/>
    </location>
    <ligand>
        <name>Zn(2+)</name>
        <dbReference type="ChEBI" id="CHEBI:29105"/>
        <label>2</label>
    </ligand>
</feature>
<reference key="1">
    <citation type="journal article" date="2008" name="J. Bacteriol.">
        <title>Complete genome sequence of Neisseria gonorrhoeae NCCP11945.</title>
        <authorList>
            <person name="Chung G.T."/>
            <person name="Yoo J.S."/>
            <person name="Oh H.B."/>
            <person name="Lee Y.S."/>
            <person name="Cha S.H."/>
            <person name="Kim S.J."/>
            <person name="Yoo C.K."/>
        </authorList>
    </citation>
    <scope>NUCLEOTIDE SEQUENCE [LARGE SCALE GENOMIC DNA]</scope>
    <source>
        <strain>NCCP11945</strain>
    </source>
</reference>
<sequence>MKITPVKALTDNYIWMIQHGNHAVCVDPSEPSPVLEFLVRNRLMLAQTWVTHPHPDHEGGAAALWRGYMESPVYGESDIEAATHTVTAGTRFTFGNGQVTVWATPGHTDRHTSYLLETSDGIHVFCGDTLFSAGCGRVFTGTVEQLYDSFQRFNQLPEGTLFYPAHEYTAANLRFAAHIEPDNADIQTALKAAERTPTLPVTLAHERRVNPFLRTEIPAVRQRAEALVGKTLNSGLEVFAALRELKNAYR</sequence>
<comment type="function">
    <text evidence="1">Thiolesterase that catalyzes the hydrolysis of S-D-lactoyl-glutathione to form glutathione and D-lactic acid.</text>
</comment>
<comment type="catalytic activity">
    <reaction evidence="1">
        <text>an S-(2-hydroxyacyl)glutathione + H2O = a 2-hydroxy carboxylate + glutathione + H(+)</text>
        <dbReference type="Rhea" id="RHEA:21864"/>
        <dbReference type="ChEBI" id="CHEBI:15377"/>
        <dbReference type="ChEBI" id="CHEBI:15378"/>
        <dbReference type="ChEBI" id="CHEBI:57925"/>
        <dbReference type="ChEBI" id="CHEBI:58896"/>
        <dbReference type="ChEBI" id="CHEBI:71261"/>
        <dbReference type="EC" id="3.1.2.6"/>
    </reaction>
</comment>
<comment type="cofactor">
    <cofactor evidence="1">
        <name>Zn(2+)</name>
        <dbReference type="ChEBI" id="CHEBI:29105"/>
    </cofactor>
    <text evidence="1">Binds 2 Zn(2+) ions per subunit.</text>
</comment>
<comment type="pathway">
    <text evidence="1">Secondary metabolite metabolism; methylglyoxal degradation; (R)-lactate from methylglyoxal: step 2/2.</text>
</comment>
<comment type="subunit">
    <text evidence="1">Monomer.</text>
</comment>
<comment type="similarity">
    <text evidence="1">Belongs to the metallo-beta-lactamase superfamily. Glyoxalase II family.</text>
</comment>
<keyword id="KW-0378">Hydrolase</keyword>
<keyword id="KW-0479">Metal-binding</keyword>
<keyword id="KW-0862">Zinc</keyword>